<keyword id="KW-0687">Ribonucleoprotein</keyword>
<keyword id="KW-0689">Ribosomal protein</keyword>
<keyword id="KW-0694">RNA-binding</keyword>
<keyword id="KW-0699">rRNA-binding</keyword>
<gene>
    <name evidence="1" type="primary">rpsE1</name>
    <name type="synonym">rpsE-1</name>
    <name type="ordered locus">LBL_0430</name>
</gene>
<gene>
    <name evidence="1" type="primary">rpsE2</name>
    <name type="synonym">rpsE</name>
    <name type="ordered locus">LBL_0470</name>
</gene>
<accession>Q055C7</accession>
<organism>
    <name type="scientific">Leptospira borgpetersenii serovar Hardjo-bovis (strain L550)</name>
    <dbReference type="NCBI Taxonomy" id="355276"/>
    <lineage>
        <taxon>Bacteria</taxon>
        <taxon>Pseudomonadati</taxon>
        <taxon>Spirochaetota</taxon>
        <taxon>Spirochaetia</taxon>
        <taxon>Leptospirales</taxon>
        <taxon>Leptospiraceae</taxon>
        <taxon>Leptospira</taxon>
    </lineage>
</organism>
<reference key="1">
    <citation type="journal article" date="2006" name="Proc. Natl. Acad. Sci. U.S.A.">
        <title>Genome reduction in Leptospira borgpetersenii reflects limited transmission potential.</title>
        <authorList>
            <person name="Bulach D.M."/>
            <person name="Zuerner R.L."/>
            <person name="Wilson P."/>
            <person name="Seemann T."/>
            <person name="McGrath A."/>
            <person name="Cullen P.A."/>
            <person name="Davis J."/>
            <person name="Johnson M."/>
            <person name="Kuczek E."/>
            <person name="Alt D.P."/>
            <person name="Peterson-Burch B."/>
            <person name="Coppel R.L."/>
            <person name="Rood J.I."/>
            <person name="Davies J.K."/>
            <person name="Adler B."/>
        </authorList>
    </citation>
    <scope>NUCLEOTIDE SEQUENCE [LARGE SCALE GENOMIC DNA]</scope>
    <source>
        <strain>L550</strain>
    </source>
</reference>
<sequence>MAYQDEESKEYSEKVVKIDRVAKVVKGGRRFSFNALSVVGDQKGKVGIGFGKANEVPDAIRKSIEAAKKHLVKINFKGHTIPHEVVGKFKSARVILKPSTAGTGIIAGASVRSIVEKAGIQDVLTKSWGSSNPVNIVKATLDALEQLETPILAAKKRGISLNQLFGKD</sequence>
<protein>
    <recommendedName>
        <fullName evidence="1">Small ribosomal subunit protein uS5</fullName>
    </recommendedName>
    <alternativeName>
        <fullName evidence="2">30S ribosomal protein S5</fullName>
    </alternativeName>
</protein>
<feature type="chain" id="PRO_0000323150" description="Small ribosomal subunit protein uS5">
    <location>
        <begin position="1"/>
        <end position="168"/>
    </location>
</feature>
<feature type="domain" description="S5 DRBM" evidence="1">
    <location>
        <begin position="11"/>
        <end position="74"/>
    </location>
</feature>
<comment type="function">
    <text evidence="1">With S4 and S12 plays an important role in translational accuracy.</text>
</comment>
<comment type="function">
    <text evidence="1">Located at the back of the 30S subunit body where it stabilizes the conformation of the head with respect to the body.</text>
</comment>
<comment type="subunit">
    <text evidence="1">Part of the 30S ribosomal subunit. Contacts proteins S4 and S8.</text>
</comment>
<comment type="domain">
    <text>The N-terminal domain interacts with the head of the 30S subunit; the C-terminal domain interacts with the body and contacts protein S4. The interaction surface between S4 and S5 is involved in control of translational fidelity.</text>
</comment>
<comment type="similarity">
    <text evidence="1">Belongs to the universal ribosomal protein uS5 family.</text>
</comment>
<dbReference type="EMBL" id="CP000348">
    <property type="protein sequence ID" value="ABJ78028.1"/>
    <property type="molecule type" value="Genomic_DNA"/>
</dbReference>
<dbReference type="EMBL" id="CP000348">
    <property type="protein sequence ID" value="ABJ78068.1"/>
    <property type="molecule type" value="Genomic_DNA"/>
</dbReference>
<dbReference type="RefSeq" id="WP_011669439.1">
    <property type="nucleotide sequence ID" value="NC_008508.1"/>
</dbReference>
<dbReference type="SMR" id="Q055C7"/>
<dbReference type="KEGG" id="lbl:LBL_0430"/>
<dbReference type="KEGG" id="lbl:LBL_0470"/>
<dbReference type="HOGENOM" id="CLU_065898_2_2_12"/>
<dbReference type="GO" id="GO:0015935">
    <property type="term" value="C:small ribosomal subunit"/>
    <property type="evidence" value="ECO:0007669"/>
    <property type="project" value="InterPro"/>
</dbReference>
<dbReference type="GO" id="GO:0019843">
    <property type="term" value="F:rRNA binding"/>
    <property type="evidence" value="ECO:0007669"/>
    <property type="project" value="UniProtKB-UniRule"/>
</dbReference>
<dbReference type="GO" id="GO:0003735">
    <property type="term" value="F:structural constituent of ribosome"/>
    <property type="evidence" value="ECO:0007669"/>
    <property type="project" value="InterPro"/>
</dbReference>
<dbReference type="GO" id="GO:0006412">
    <property type="term" value="P:translation"/>
    <property type="evidence" value="ECO:0007669"/>
    <property type="project" value="UniProtKB-UniRule"/>
</dbReference>
<dbReference type="FunFam" id="3.30.160.20:FF:000001">
    <property type="entry name" value="30S ribosomal protein S5"/>
    <property type="match status" value="1"/>
</dbReference>
<dbReference type="FunFam" id="3.30.230.10:FF:000002">
    <property type="entry name" value="30S ribosomal protein S5"/>
    <property type="match status" value="1"/>
</dbReference>
<dbReference type="Gene3D" id="3.30.160.20">
    <property type="match status" value="1"/>
</dbReference>
<dbReference type="Gene3D" id="3.30.230.10">
    <property type="match status" value="1"/>
</dbReference>
<dbReference type="HAMAP" id="MF_01307_B">
    <property type="entry name" value="Ribosomal_uS5_B"/>
    <property type="match status" value="1"/>
</dbReference>
<dbReference type="InterPro" id="IPR020568">
    <property type="entry name" value="Ribosomal_Su5_D2-typ_SF"/>
</dbReference>
<dbReference type="InterPro" id="IPR000851">
    <property type="entry name" value="Ribosomal_uS5"/>
</dbReference>
<dbReference type="InterPro" id="IPR005712">
    <property type="entry name" value="Ribosomal_uS5_bac-type"/>
</dbReference>
<dbReference type="InterPro" id="IPR005324">
    <property type="entry name" value="Ribosomal_uS5_C"/>
</dbReference>
<dbReference type="InterPro" id="IPR013810">
    <property type="entry name" value="Ribosomal_uS5_N"/>
</dbReference>
<dbReference type="InterPro" id="IPR018192">
    <property type="entry name" value="Ribosomal_uS5_N_CS"/>
</dbReference>
<dbReference type="InterPro" id="IPR014721">
    <property type="entry name" value="Ribsml_uS5_D2-typ_fold_subgr"/>
</dbReference>
<dbReference type="NCBIfam" id="TIGR01021">
    <property type="entry name" value="rpsE_bact"/>
    <property type="match status" value="1"/>
</dbReference>
<dbReference type="PANTHER" id="PTHR48277">
    <property type="entry name" value="MITOCHONDRIAL RIBOSOMAL PROTEIN S5"/>
    <property type="match status" value="1"/>
</dbReference>
<dbReference type="PANTHER" id="PTHR48277:SF1">
    <property type="entry name" value="MITOCHONDRIAL RIBOSOMAL PROTEIN S5"/>
    <property type="match status" value="1"/>
</dbReference>
<dbReference type="Pfam" id="PF00333">
    <property type="entry name" value="Ribosomal_S5"/>
    <property type="match status" value="1"/>
</dbReference>
<dbReference type="Pfam" id="PF03719">
    <property type="entry name" value="Ribosomal_S5_C"/>
    <property type="match status" value="1"/>
</dbReference>
<dbReference type="SUPFAM" id="SSF54768">
    <property type="entry name" value="dsRNA-binding domain-like"/>
    <property type="match status" value="1"/>
</dbReference>
<dbReference type="SUPFAM" id="SSF54211">
    <property type="entry name" value="Ribosomal protein S5 domain 2-like"/>
    <property type="match status" value="1"/>
</dbReference>
<dbReference type="PROSITE" id="PS00585">
    <property type="entry name" value="RIBOSOMAL_S5"/>
    <property type="match status" value="1"/>
</dbReference>
<dbReference type="PROSITE" id="PS50881">
    <property type="entry name" value="S5_DSRBD"/>
    <property type="match status" value="1"/>
</dbReference>
<evidence type="ECO:0000255" key="1">
    <source>
        <dbReference type="HAMAP-Rule" id="MF_01307"/>
    </source>
</evidence>
<evidence type="ECO:0000305" key="2"/>
<proteinExistence type="inferred from homology"/>
<name>RS5_LEPBL</name>